<accession>C3PG93</accession>
<proteinExistence type="inferred from homology"/>
<reference key="1">
    <citation type="journal article" date="2010" name="BMC Genomics">
        <title>Complete genome sequence and lifestyle of black-pigmented Corynebacterium aurimucosum ATCC 700975 (formerly C. nigricans CN-1) isolated from a vaginal swab of a woman with spontaneous abortion.</title>
        <authorList>
            <person name="Trost E."/>
            <person name="Gotker S."/>
            <person name="Schneider J."/>
            <person name="Schneiker-Bekel S."/>
            <person name="Szczepanowski R."/>
            <person name="Tilker A."/>
            <person name="Viehoever P."/>
            <person name="Arnold W."/>
            <person name="Bekel T."/>
            <person name="Blom J."/>
            <person name="Gartemann K.H."/>
            <person name="Linke B."/>
            <person name="Goesmann A."/>
            <person name="Puhler A."/>
            <person name="Shukla S.K."/>
            <person name="Tauch A."/>
        </authorList>
    </citation>
    <scope>NUCLEOTIDE SEQUENCE [LARGE SCALE GENOMIC DNA]</scope>
    <source>
        <strain>ATCC 700975 / DSM 44827 / CIP 107346 / CN-1</strain>
    </source>
</reference>
<evidence type="ECO:0000255" key="1">
    <source>
        <dbReference type="HAMAP-Rule" id="MF_00079"/>
    </source>
</evidence>
<dbReference type="EC" id="2.4.2.17" evidence="1"/>
<dbReference type="EMBL" id="CP001601">
    <property type="protein sequence ID" value="ACP32847.1"/>
    <property type="molecule type" value="Genomic_DNA"/>
</dbReference>
<dbReference type="RefSeq" id="WP_010186656.1">
    <property type="nucleotide sequence ID" value="NC_012590.1"/>
</dbReference>
<dbReference type="SMR" id="C3PG93"/>
<dbReference type="STRING" id="548476.cauri_1254"/>
<dbReference type="GeneID" id="31923877"/>
<dbReference type="KEGG" id="car:cauri_1254"/>
<dbReference type="eggNOG" id="COG0040">
    <property type="taxonomic scope" value="Bacteria"/>
</dbReference>
<dbReference type="HOGENOM" id="CLU_038115_1_1_11"/>
<dbReference type="OrthoDB" id="9801867at2"/>
<dbReference type="UniPathway" id="UPA00031">
    <property type="reaction ID" value="UER00006"/>
</dbReference>
<dbReference type="Proteomes" id="UP000002077">
    <property type="component" value="Chromosome"/>
</dbReference>
<dbReference type="GO" id="GO:0005737">
    <property type="term" value="C:cytoplasm"/>
    <property type="evidence" value="ECO:0007669"/>
    <property type="project" value="UniProtKB-SubCell"/>
</dbReference>
<dbReference type="GO" id="GO:0005524">
    <property type="term" value="F:ATP binding"/>
    <property type="evidence" value="ECO:0007669"/>
    <property type="project" value="UniProtKB-KW"/>
</dbReference>
<dbReference type="GO" id="GO:0003879">
    <property type="term" value="F:ATP phosphoribosyltransferase activity"/>
    <property type="evidence" value="ECO:0007669"/>
    <property type="project" value="UniProtKB-UniRule"/>
</dbReference>
<dbReference type="GO" id="GO:0000287">
    <property type="term" value="F:magnesium ion binding"/>
    <property type="evidence" value="ECO:0007669"/>
    <property type="project" value="UniProtKB-UniRule"/>
</dbReference>
<dbReference type="GO" id="GO:0000105">
    <property type="term" value="P:L-histidine biosynthetic process"/>
    <property type="evidence" value="ECO:0007669"/>
    <property type="project" value="UniProtKB-UniRule"/>
</dbReference>
<dbReference type="CDD" id="cd13591">
    <property type="entry name" value="PBP2_HisGL1"/>
    <property type="match status" value="1"/>
</dbReference>
<dbReference type="Gene3D" id="3.30.70.120">
    <property type="match status" value="1"/>
</dbReference>
<dbReference type="Gene3D" id="3.40.190.10">
    <property type="entry name" value="Periplasmic binding protein-like II"/>
    <property type="match status" value="2"/>
</dbReference>
<dbReference type="HAMAP" id="MF_00079">
    <property type="entry name" value="HisG_Long"/>
    <property type="match status" value="1"/>
</dbReference>
<dbReference type="InterPro" id="IPR020621">
    <property type="entry name" value="ATP-PRT_HisG_long"/>
</dbReference>
<dbReference type="InterPro" id="IPR013820">
    <property type="entry name" value="ATP_PRibTrfase_cat"/>
</dbReference>
<dbReference type="InterPro" id="IPR018198">
    <property type="entry name" value="ATP_PRibTrfase_CS"/>
</dbReference>
<dbReference type="InterPro" id="IPR001348">
    <property type="entry name" value="ATP_PRibTrfase_HisG"/>
</dbReference>
<dbReference type="InterPro" id="IPR013115">
    <property type="entry name" value="HisG_C"/>
</dbReference>
<dbReference type="InterPro" id="IPR011322">
    <property type="entry name" value="N-reg_PII-like_a/b"/>
</dbReference>
<dbReference type="InterPro" id="IPR015867">
    <property type="entry name" value="N-reg_PII/ATP_PRibTrfase_C"/>
</dbReference>
<dbReference type="NCBIfam" id="TIGR00070">
    <property type="entry name" value="hisG"/>
    <property type="match status" value="1"/>
</dbReference>
<dbReference type="NCBIfam" id="TIGR03455">
    <property type="entry name" value="HisG_C-term"/>
    <property type="match status" value="1"/>
</dbReference>
<dbReference type="PANTHER" id="PTHR21403:SF8">
    <property type="entry name" value="ATP PHOSPHORIBOSYLTRANSFERASE"/>
    <property type="match status" value="1"/>
</dbReference>
<dbReference type="PANTHER" id="PTHR21403">
    <property type="entry name" value="ATP PHOSPHORIBOSYLTRANSFERASE ATP-PRTASE"/>
    <property type="match status" value="1"/>
</dbReference>
<dbReference type="Pfam" id="PF01634">
    <property type="entry name" value="HisG"/>
    <property type="match status" value="1"/>
</dbReference>
<dbReference type="Pfam" id="PF08029">
    <property type="entry name" value="HisG_C"/>
    <property type="match status" value="1"/>
</dbReference>
<dbReference type="SUPFAM" id="SSF54913">
    <property type="entry name" value="GlnB-like"/>
    <property type="match status" value="1"/>
</dbReference>
<dbReference type="SUPFAM" id="SSF53850">
    <property type="entry name" value="Periplasmic binding protein-like II"/>
    <property type="match status" value="1"/>
</dbReference>
<dbReference type="PROSITE" id="PS01316">
    <property type="entry name" value="ATP_P_PHORIBOSYLTR"/>
    <property type="match status" value="1"/>
</dbReference>
<feature type="chain" id="PRO_1000118249" description="ATP phosphoribosyltransferase">
    <location>
        <begin position="1"/>
        <end position="281"/>
    </location>
</feature>
<comment type="function">
    <text evidence="1">Catalyzes the condensation of ATP and 5-phosphoribose 1-diphosphate to form N'-(5'-phosphoribosyl)-ATP (PR-ATP). Has a crucial role in the pathway because the rate of histidine biosynthesis seems to be controlled primarily by regulation of HisG enzymatic activity.</text>
</comment>
<comment type="catalytic activity">
    <reaction evidence="1">
        <text>1-(5-phospho-beta-D-ribosyl)-ATP + diphosphate = 5-phospho-alpha-D-ribose 1-diphosphate + ATP</text>
        <dbReference type="Rhea" id="RHEA:18473"/>
        <dbReference type="ChEBI" id="CHEBI:30616"/>
        <dbReference type="ChEBI" id="CHEBI:33019"/>
        <dbReference type="ChEBI" id="CHEBI:58017"/>
        <dbReference type="ChEBI" id="CHEBI:73183"/>
        <dbReference type="EC" id="2.4.2.17"/>
    </reaction>
</comment>
<comment type="cofactor">
    <cofactor evidence="1">
        <name>Mg(2+)</name>
        <dbReference type="ChEBI" id="CHEBI:18420"/>
    </cofactor>
</comment>
<comment type="activity regulation">
    <text evidence="1">Feedback inhibited by histidine.</text>
</comment>
<comment type="pathway">
    <text evidence="1">Amino-acid biosynthesis; L-histidine biosynthesis; L-histidine from 5-phospho-alpha-D-ribose 1-diphosphate: step 1/9.</text>
</comment>
<comment type="subcellular location">
    <subcellularLocation>
        <location evidence="1">Cytoplasm</location>
    </subcellularLocation>
</comment>
<comment type="similarity">
    <text evidence="1">Belongs to the ATP phosphoribosyltransferase family. Long subfamily.</text>
</comment>
<protein>
    <recommendedName>
        <fullName evidence="1">ATP phosphoribosyltransferase</fullName>
        <shortName evidence="1">ATP-PRT</shortName>
        <shortName evidence="1">ATP-PRTase</shortName>
        <ecNumber evidence="1">2.4.2.17</ecNumber>
    </recommendedName>
</protein>
<keyword id="KW-0028">Amino-acid biosynthesis</keyword>
<keyword id="KW-0067">ATP-binding</keyword>
<keyword id="KW-0963">Cytoplasm</keyword>
<keyword id="KW-0328">Glycosyltransferase</keyword>
<keyword id="KW-0368">Histidine biosynthesis</keyword>
<keyword id="KW-0460">Magnesium</keyword>
<keyword id="KW-0479">Metal-binding</keyword>
<keyword id="KW-0547">Nucleotide-binding</keyword>
<keyword id="KW-1185">Reference proteome</keyword>
<keyword id="KW-0808">Transferase</keyword>
<organism>
    <name type="scientific">Corynebacterium aurimucosum (strain ATCC 700975 / DSM 44827 / CIP 107346 / CN-1)</name>
    <name type="common">Corynebacterium nigricans</name>
    <dbReference type="NCBI Taxonomy" id="548476"/>
    <lineage>
        <taxon>Bacteria</taxon>
        <taxon>Bacillati</taxon>
        <taxon>Actinomycetota</taxon>
        <taxon>Actinomycetes</taxon>
        <taxon>Mycobacteriales</taxon>
        <taxon>Corynebacteriaceae</taxon>
        <taxon>Corynebacterium</taxon>
    </lineage>
</organism>
<name>HIS1_CORA7</name>
<gene>
    <name evidence="1" type="primary">hisG</name>
    <name type="ordered locus">cauri_1254</name>
</gene>
<sequence length="281" mass="30382">MIKIAVPNKGSLSEAALEILKEAGYKGRGHNKSLNVVDEENGVEFFFLRPKDIAIYVAQGVLDLGITGRDLALDSRAKFNEVLALNFGGSTFRYAAPAGEEWDVAKLQGKRIATSYPNVVRDHLAANGIDAEVIRLDGAVEISIHLGVADVIADVVSTGTTLRQQGLEPFGEPIVTSEAVVIKREGEDVTADENVVLSRIRGILNARHYVMLDYNVAEEKLPNVEAVTPGLTGPTISPLAREGWVAVRVMVPRKLANQVMDSLEELGAEAILASDLRIARF</sequence>